<accession>C1A2X7</accession>
<gene>
    <name evidence="1" type="primary">coaA</name>
    <name type="ordered locus">RER_42540</name>
</gene>
<keyword id="KW-0067">ATP-binding</keyword>
<keyword id="KW-0173">Coenzyme A biosynthesis</keyword>
<keyword id="KW-0963">Cytoplasm</keyword>
<keyword id="KW-0418">Kinase</keyword>
<keyword id="KW-0547">Nucleotide-binding</keyword>
<keyword id="KW-0808">Transferase</keyword>
<organism>
    <name type="scientific">Rhodococcus erythropolis (strain PR4 / NBRC 100887)</name>
    <dbReference type="NCBI Taxonomy" id="234621"/>
    <lineage>
        <taxon>Bacteria</taxon>
        <taxon>Bacillati</taxon>
        <taxon>Actinomycetota</taxon>
        <taxon>Actinomycetes</taxon>
        <taxon>Mycobacteriales</taxon>
        <taxon>Nocardiaceae</taxon>
        <taxon>Rhodococcus</taxon>
        <taxon>Rhodococcus erythropolis group</taxon>
    </lineage>
</organism>
<proteinExistence type="inferred from homology"/>
<reference key="1">
    <citation type="submission" date="2005-03" db="EMBL/GenBank/DDBJ databases">
        <title>Comparison of the complete genome sequences of Rhodococcus erythropolis PR4 and Rhodococcus opacus B4.</title>
        <authorList>
            <person name="Takarada H."/>
            <person name="Sekine M."/>
            <person name="Hosoyama A."/>
            <person name="Yamada R."/>
            <person name="Fujisawa T."/>
            <person name="Omata S."/>
            <person name="Shimizu A."/>
            <person name="Tsukatani N."/>
            <person name="Tanikawa S."/>
            <person name="Fujita N."/>
            <person name="Harayama S."/>
        </authorList>
    </citation>
    <scope>NUCLEOTIDE SEQUENCE [LARGE SCALE GENOMIC DNA]</scope>
    <source>
        <strain>PR4 / NBRC 100887</strain>
    </source>
</reference>
<name>COAA_RHOE4</name>
<feature type="chain" id="PRO_1000204219" description="Pantothenate kinase">
    <location>
        <begin position="1"/>
        <end position="310"/>
    </location>
</feature>
<feature type="binding site" evidence="1">
    <location>
        <begin position="95"/>
        <end position="102"/>
    </location>
    <ligand>
        <name>ATP</name>
        <dbReference type="ChEBI" id="CHEBI:30616"/>
    </ligand>
</feature>
<sequence>MARTNESSPYVEFDRKQWRTLRKSTPLVLTEDELYGLRGLGEQIDLEEVAEVYLPLARLIHLQVAARQRLFAATATFLGEKHPDRQVPFVIGVAGSVAVGKSTTARVLQALLARWDHHPRVDLVTTDGFLYPTRELQRRGIMHRKGFPESYDRRKLLRFVTEVKSGAEEVAAPVYSHTSYDIIPGQYHLIRQPDILIIEGLNVLQTGPRLMVSDLFDFSIYVDARIEDIEAWYIQRFLALRNTSFADPNAHFHHYSGLSDRDATIAAKEIWNSINHPNLVENILPTRPRATLVLRKDADHTINRLRLRKL</sequence>
<comment type="catalytic activity">
    <reaction evidence="1">
        <text>(R)-pantothenate + ATP = (R)-4'-phosphopantothenate + ADP + H(+)</text>
        <dbReference type="Rhea" id="RHEA:16373"/>
        <dbReference type="ChEBI" id="CHEBI:10986"/>
        <dbReference type="ChEBI" id="CHEBI:15378"/>
        <dbReference type="ChEBI" id="CHEBI:29032"/>
        <dbReference type="ChEBI" id="CHEBI:30616"/>
        <dbReference type="ChEBI" id="CHEBI:456216"/>
        <dbReference type="EC" id="2.7.1.33"/>
    </reaction>
</comment>
<comment type="pathway">
    <text evidence="1">Cofactor biosynthesis; coenzyme A biosynthesis; CoA from (R)-pantothenate: step 1/5.</text>
</comment>
<comment type="subcellular location">
    <subcellularLocation>
        <location evidence="1">Cytoplasm</location>
    </subcellularLocation>
</comment>
<comment type="similarity">
    <text evidence="1">Belongs to the prokaryotic pantothenate kinase family.</text>
</comment>
<dbReference type="EC" id="2.7.1.33" evidence="1"/>
<dbReference type="EMBL" id="AP008957">
    <property type="protein sequence ID" value="BAH34962.1"/>
    <property type="molecule type" value="Genomic_DNA"/>
</dbReference>
<dbReference type="RefSeq" id="WP_003945270.1">
    <property type="nucleotide sequence ID" value="NC_012490.1"/>
</dbReference>
<dbReference type="SMR" id="C1A2X7"/>
<dbReference type="GeneID" id="64142025"/>
<dbReference type="KEGG" id="rer:RER_42540"/>
<dbReference type="eggNOG" id="COG1072">
    <property type="taxonomic scope" value="Bacteria"/>
</dbReference>
<dbReference type="HOGENOM" id="CLU_053818_1_1_11"/>
<dbReference type="UniPathway" id="UPA00241">
    <property type="reaction ID" value="UER00352"/>
</dbReference>
<dbReference type="Proteomes" id="UP000002204">
    <property type="component" value="Chromosome"/>
</dbReference>
<dbReference type="GO" id="GO:0005737">
    <property type="term" value="C:cytoplasm"/>
    <property type="evidence" value="ECO:0007669"/>
    <property type="project" value="UniProtKB-SubCell"/>
</dbReference>
<dbReference type="GO" id="GO:0005524">
    <property type="term" value="F:ATP binding"/>
    <property type="evidence" value="ECO:0007669"/>
    <property type="project" value="UniProtKB-UniRule"/>
</dbReference>
<dbReference type="GO" id="GO:0004594">
    <property type="term" value="F:pantothenate kinase activity"/>
    <property type="evidence" value="ECO:0007669"/>
    <property type="project" value="UniProtKB-UniRule"/>
</dbReference>
<dbReference type="GO" id="GO:0015937">
    <property type="term" value="P:coenzyme A biosynthetic process"/>
    <property type="evidence" value="ECO:0007669"/>
    <property type="project" value="UniProtKB-UniRule"/>
</dbReference>
<dbReference type="CDD" id="cd02025">
    <property type="entry name" value="PanK"/>
    <property type="match status" value="1"/>
</dbReference>
<dbReference type="FunFam" id="3.40.50.300:FF:000242">
    <property type="entry name" value="Pantothenate kinase"/>
    <property type="match status" value="1"/>
</dbReference>
<dbReference type="Gene3D" id="3.40.50.300">
    <property type="entry name" value="P-loop containing nucleotide triphosphate hydrolases"/>
    <property type="match status" value="1"/>
</dbReference>
<dbReference type="HAMAP" id="MF_00215">
    <property type="entry name" value="Pantothen_kinase_1"/>
    <property type="match status" value="1"/>
</dbReference>
<dbReference type="InterPro" id="IPR027417">
    <property type="entry name" value="P-loop_NTPase"/>
</dbReference>
<dbReference type="InterPro" id="IPR004566">
    <property type="entry name" value="PanK"/>
</dbReference>
<dbReference type="InterPro" id="IPR006083">
    <property type="entry name" value="PRK/URK"/>
</dbReference>
<dbReference type="NCBIfam" id="TIGR00554">
    <property type="entry name" value="panK_bact"/>
    <property type="match status" value="1"/>
</dbReference>
<dbReference type="PANTHER" id="PTHR10285">
    <property type="entry name" value="URIDINE KINASE"/>
    <property type="match status" value="1"/>
</dbReference>
<dbReference type="Pfam" id="PF00485">
    <property type="entry name" value="PRK"/>
    <property type="match status" value="1"/>
</dbReference>
<dbReference type="PIRSF" id="PIRSF000545">
    <property type="entry name" value="Pantothenate_kin"/>
    <property type="match status" value="1"/>
</dbReference>
<dbReference type="SUPFAM" id="SSF52540">
    <property type="entry name" value="P-loop containing nucleoside triphosphate hydrolases"/>
    <property type="match status" value="1"/>
</dbReference>
<protein>
    <recommendedName>
        <fullName evidence="1">Pantothenate kinase</fullName>
        <ecNumber evidence="1">2.7.1.33</ecNumber>
    </recommendedName>
    <alternativeName>
        <fullName evidence="1">Pantothenic acid kinase</fullName>
    </alternativeName>
</protein>
<evidence type="ECO:0000255" key="1">
    <source>
        <dbReference type="HAMAP-Rule" id="MF_00215"/>
    </source>
</evidence>